<accession>Q8EBP4</accession>
<name>NUSB_SHEON</name>
<reference key="1">
    <citation type="journal article" date="2002" name="Nat. Biotechnol.">
        <title>Genome sequence of the dissimilatory metal ion-reducing bacterium Shewanella oneidensis.</title>
        <authorList>
            <person name="Heidelberg J.F."/>
            <person name="Paulsen I.T."/>
            <person name="Nelson K.E."/>
            <person name="Gaidos E.J."/>
            <person name="Nelson W.C."/>
            <person name="Read T.D."/>
            <person name="Eisen J.A."/>
            <person name="Seshadri R."/>
            <person name="Ward N.L."/>
            <person name="Methe B.A."/>
            <person name="Clayton R.A."/>
            <person name="Meyer T."/>
            <person name="Tsapin A."/>
            <person name="Scott J."/>
            <person name="Beanan M.J."/>
            <person name="Brinkac L.M."/>
            <person name="Daugherty S.C."/>
            <person name="DeBoy R.T."/>
            <person name="Dodson R.J."/>
            <person name="Durkin A.S."/>
            <person name="Haft D.H."/>
            <person name="Kolonay J.F."/>
            <person name="Madupu R."/>
            <person name="Peterson J.D."/>
            <person name="Umayam L.A."/>
            <person name="White O."/>
            <person name="Wolf A.M."/>
            <person name="Vamathevan J.J."/>
            <person name="Weidman J.F."/>
            <person name="Impraim M."/>
            <person name="Lee K."/>
            <person name="Berry K.J."/>
            <person name="Lee C."/>
            <person name="Mueller J."/>
            <person name="Khouri H.M."/>
            <person name="Gill J."/>
            <person name="Utterback T.R."/>
            <person name="McDonald L.A."/>
            <person name="Feldblyum T.V."/>
            <person name="Smith H.O."/>
            <person name="Venter J.C."/>
            <person name="Nealson K.H."/>
            <person name="Fraser C.M."/>
        </authorList>
    </citation>
    <scope>NUCLEOTIDE SEQUENCE [LARGE SCALE GENOMIC DNA]</scope>
    <source>
        <strain>ATCC 700550 / JCM 31522 / CIP 106686 / LMG 19005 / NCIMB 14063 / MR-1</strain>
    </source>
</reference>
<comment type="function">
    <text evidence="1">Involved in transcription antitermination. Required for transcription of ribosomal RNA (rRNA) genes. Binds specifically to the boxA antiterminator sequence of the ribosomal RNA (rrn) operons.</text>
</comment>
<comment type="similarity">
    <text evidence="1">Belongs to the NusB family.</text>
</comment>
<sequence length="134" mass="15150">MKPSERRKARRLAVQAIYSWQLSGNNIADVEHEFLTEQSLDGVDVAYFRELFAGVATKKTQLDELIIPHLDRPIDEVSPVEKAIVRLAAYELTFRKDVPFKVAINEAIELAKAFGADESHKFVNGLLDKLVARK</sequence>
<proteinExistence type="inferred from homology"/>
<dbReference type="EMBL" id="AE014299">
    <property type="protein sequence ID" value="AAN56458.1"/>
    <property type="molecule type" value="Genomic_DNA"/>
</dbReference>
<dbReference type="RefSeq" id="NP_719014.1">
    <property type="nucleotide sequence ID" value="NC_004347.2"/>
</dbReference>
<dbReference type="RefSeq" id="WP_011073312.1">
    <property type="nucleotide sequence ID" value="NZ_CP053946.1"/>
</dbReference>
<dbReference type="SMR" id="Q8EBP4"/>
<dbReference type="STRING" id="211586.SO_3465"/>
<dbReference type="PaxDb" id="211586-SO_3465"/>
<dbReference type="KEGG" id="son:SO_3465"/>
<dbReference type="PATRIC" id="fig|211586.12.peg.3364"/>
<dbReference type="eggNOG" id="COG0781">
    <property type="taxonomic scope" value="Bacteria"/>
</dbReference>
<dbReference type="HOGENOM" id="CLU_087843_4_1_6"/>
<dbReference type="OrthoDB" id="9789556at2"/>
<dbReference type="PhylomeDB" id="Q8EBP4"/>
<dbReference type="BioCyc" id="SONE211586:G1GMP-3234-MONOMER"/>
<dbReference type="Proteomes" id="UP000008186">
    <property type="component" value="Chromosome"/>
</dbReference>
<dbReference type="GO" id="GO:0005829">
    <property type="term" value="C:cytosol"/>
    <property type="evidence" value="ECO:0000318"/>
    <property type="project" value="GO_Central"/>
</dbReference>
<dbReference type="GO" id="GO:0003723">
    <property type="term" value="F:RNA binding"/>
    <property type="evidence" value="ECO:0007669"/>
    <property type="project" value="UniProtKB-UniRule"/>
</dbReference>
<dbReference type="GO" id="GO:0006353">
    <property type="term" value="P:DNA-templated transcription termination"/>
    <property type="evidence" value="ECO:0007669"/>
    <property type="project" value="UniProtKB-UniRule"/>
</dbReference>
<dbReference type="GO" id="GO:0031564">
    <property type="term" value="P:transcription antitermination"/>
    <property type="evidence" value="ECO:0007669"/>
    <property type="project" value="UniProtKB-KW"/>
</dbReference>
<dbReference type="CDD" id="cd00619">
    <property type="entry name" value="Terminator_NusB"/>
    <property type="match status" value="1"/>
</dbReference>
<dbReference type="FunFam" id="1.10.940.10:FF:000001">
    <property type="entry name" value="Transcription antitermination factor NusB"/>
    <property type="match status" value="1"/>
</dbReference>
<dbReference type="Gene3D" id="1.10.940.10">
    <property type="entry name" value="NusB-like"/>
    <property type="match status" value="1"/>
</dbReference>
<dbReference type="HAMAP" id="MF_00073">
    <property type="entry name" value="NusB"/>
    <property type="match status" value="1"/>
</dbReference>
<dbReference type="InterPro" id="IPR035926">
    <property type="entry name" value="NusB-like_sf"/>
</dbReference>
<dbReference type="InterPro" id="IPR011605">
    <property type="entry name" value="NusB_fam"/>
</dbReference>
<dbReference type="InterPro" id="IPR006027">
    <property type="entry name" value="NusB_RsmB_TIM44"/>
</dbReference>
<dbReference type="NCBIfam" id="TIGR01951">
    <property type="entry name" value="nusB"/>
    <property type="match status" value="1"/>
</dbReference>
<dbReference type="PANTHER" id="PTHR11078:SF3">
    <property type="entry name" value="ANTITERMINATION NUSB DOMAIN-CONTAINING PROTEIN"/>
    <property type="match status" value="1"/>
</dbReference>
<dbReference type="PANTHER" id="PTHR11078">
    <property type="entry name" value="N UTILIZATION SUBSTANCE PROTEIN B-RELATED"/>
    <property type="match status" value="1"/>
</dbReference>
<dbReference type="Pfam" id="PF01029">
    <property type="entry name" value="NusB"/>
    <property type="match status" value="1"/>
</dbReference>
<dbReference type="SUPFAM" id="SSF48013">
    <property type="entry name" value="NusB-like"/>
    <property type="match status" value="1"/>
</dbReference>
<feature type="chain" id="PRO_0000176575" description="Transcription antitermination protein NusB">
    <location>
        <begin position="1"/>
        <end position="134"/>
    </location>
</feature>
<gene>
    <name evidence="1" type="primary">nusB</name>
    <name type="ordered locus">SO_3465</name>
</gene>
<keyword id="KW-1185">Reference proteome</keyword>
<keyword id="KW-0694">RNA-binding</keyword>
<keyword id="KW-0804">Transcription</keyword>
<keyword id="KW-0889">Transcription antitermination</keyword>
<keyword id="KW-0805">Transcription regulation</keyword>
<evidence type="ECO:0000255" key="1">
    <source>
        <dbReference type="HAMAP-Rule" id="MF_00073"/>
    </source>
</evidence>
<organism>
    <name type="scientific">Shewanella oneidensis (strain ATCC 700550 / JCM 31522 / CIP 106686 / LMG 19005 / NCIMB 14063 / MR-1)</name>
    <dbReference type="NCBI Taxonomy" id="211586"/>
    <lineage>
        <taxon>Bacteria</taxon>
        <taxon>Pseudomonadati</taxon>
        <taxon>Pseudomonadota</taxon>
        <taxon>Gammaproteobacteria</taxon>
        <taxon>Alteromonadales</taxon>
        <taxon>Shewanellaceae</taxon>
        <taxon>Shewanella</taxon>
    </lineage>
</organism>
<protein>
    <recommendedName>
        <fullName evidence="1">Transcription antitermination protein NusB</fullName>
    </recommendedName>
    <alternativeName>
        <fullName evidence="1">Antitermination factor NusB</fullName>
    </alternativeName>
</protein>